<reference key="1">
    <citation type="journal article" date="2003" name="Proc. Natl. Acad. Sci. U.S.A.">
        <title>The genome sequence of Blochmannia floridanus: comparative analysis of reduced genomes.</title>
        <authorList>
            <person name="Gil R."/>
            <person name="Silva F.J."/>
            <person name="Zientz E."/>
            <person name="Delmotte F."/>
            <person name="Gonzalez-Candelas F."/>
            <person name="Latorre A."/>
            <person name="Rausell C."/>
            <person name="Kamerbeek J."/>
            <person name="Gadau J."/>
            <person name="Hoelldobler B."/>
            <person name="van Ham R.C.H.J."/>
            <person name="Gross R."/>
            <person name="Moya A."/>
        </authorList>
    </citation>
    <scope>NUCLEOTIDE SEQUENCE [LARGE SCALE GENOMIC DNA]</scope>
</reference>
<protein>
    <recommendedName>
        <fullName evidence="1">Large ribosomal subunit protein uL3</fullName>
    </recommendedName>
    <alternativeName>
        <fullName evidence="2">50S ribosomal protein L3</fullName>
    </alternativeName>
</protein>
<dbReference type="EMBL" id="BX248583">
    <property type="protein sequence ID" value="CAD83706.1"/>
    <property type="molecule type" value="Genomic_DNA"/>
</dbReference>
<dbReference type="SMR" id="Q7VQE8"/>
<dbReference type="STRING" id="203907.Bfl191"/>
<dbReference type="KEGG" id="bfl:Bfl191"/>
<dbReference type="eggNOG" id="COG0087">
    <property type="taxonomic scope" value="Bacteria"/>
</dbReference>
<dbReference type="HOGENOM" id="CLU_044142_4_1_6"/>
<dbReference type="OrthoDB" id="9806135at2"/>
<dbReference type="Proteomes" id="UP000002192">
    <property type="component" value="Chromosome"/>
</dbReference>
<dbReference type="GO" id="GO:0022625">
    <property type="term" value="C:cytosolic large ribosomal subunit"/>
    <property type="evidence" value="ECO:0007669"/>
    <property type="project" value="TreeGrafter"/>
</dbReference>
<dbReference type="GO" id="GO:0019843">
    <property type="term" value="F:rRNA binding"/>
    <property type="evidence" value="ECO:0007669"/>
    <property type="project" value="UniProtKB-UniRule"/>
</dbReference>
<dbReference type="GO" id="GO:0003735">
    <property type="term" value="F:structural constituent of ribosome"/>
    <property type="evidence" value="ECO:0007669"/>
    <property type="project" value="InterPro"/>
</dbReference>
<dbReference type="GO" id="GO:0006412">
    <property type="term" value="P:translation"/>
    <property type="evidence" value="ECO:0007669"/>
    <property type="project" value="UniProtKB-UniRule"/>
</dbReference>
<dbReference type="FunFam" id="2.40.30.10:FF:000004">
    <property type="entry name" value="50S ribosomal protein L3"/>
    <property type="match status" value="1"/>
</dbReference>
<dbReference type="FunFam" id="3.30.160.810:FF:000001">
    <property type="entry name" value="50S ribosomal protein L3"/>
    <property type="match status" value="1"/>
</dbReference>
<dbReference type="Gene3D" id="3.30.160.810">
    <property type="match status" value="1"/>
</dbReference>
<dbReference type="Gene3D" id="2.40.30.10">
    <property type="entry name" value="Translation factors"/>
    <property type="match status" value="1"/>
</dbReference>
<dbReference type="HAMAP" id="MF_01325_B">
    <property type="entry name" value="Ribosomal_uL3_B"/>
    <property type="match status" value="1"/>
</dbReference>
<dbReference type="InterPro" id="IPR000597">
    <property type="entry name" value="Ribosomal_uL3"/>
</dbReference>
<dbReference type="InterPro" id="IPR019927">
    <property type="entry name" value="Ribosomal_uL3_bac/org-type"/>
</dbReference>
<dbReference type="InterPro" id="IPR019926">
    <property type="entry name" value="Ribosomal_uL3_CS"/>
</dbReference>
<dbReference type="InterPro" id="IPR009000">
    <property type="entry name" value="Transl_B-barrel_sf"/>
</dbReference>
<dbReference type="NCBIfam" id="TIGR03625">
    <property type="entry name" value="L3_bact"/>
    <property type="match status" value="1"/>
</dbReference>
<dbReference type="PANTHER" id="PTHR11229">
    <property type="entry name" value="50S RIBOSOMAL PROTEIN L3"/>
    <property type="match status" value="1"/>
</dbReference>
<dbReference type="PANTHER" id="PTHR11229:SF16">
    <property type="entry name" value="LARGE RIBOSOMAL SUBUNIT PROTEIN UL3C"/>
    <property type="match status" value="1"/>
</dbReference>
<dbReference type="Pfam" id="PF00297">
    <property type="entry name" value="Ribosomal_L3"/>
    <property type="match status" value="1"/>
</dbReference>
<dbReference type="SUPFAM" id="SSF50447">
    <property type="entry name" value="Translation proteins"/>
    <property type="match status" value="1"/>
</dbReference>
<dbReference type="PROSITE" id="PS00474">
    <property type="entry name" value="RIBOSOMAL_L3"/>
    <property type="match status" value="1"/>
</dbReference>
<feature type="chain" id="PRO_0000077081" description="Large ribosomal subunit protein uL3">
    <location>
        <begin position="1"/>
        <end position="219"/>
    </location>
</feature>
<feature type="modified residue" description="N5-methylglutamine" evidence="1">
    <location>
        <position position="151"/>
    </location>
</feature>
<name>RL3_BLOFL</name>
<accession>Q7VQE8</accession>
<organism>
    <name type="scientific">Blochmanniella floridana</name>
    <dbReference type="NCBI Taxonomy" id="203907"/>
    <lineage>
        <taxon>Bacteria</taxon>
        <taxon>Pseudomonadati</taxon>
        <taxon>Pseudomonadota</taxon>
        <taxon>Gammaproteobacteria</taxon>
        <taxon>Enterobacterales</taxon>
        <taxon>Enterobacteriaceae</taxon>
        <taxon>ant endosymbionts</taxon>
        <taxon>Candidatus Blochmanniella</taxon>
    </lineage>
</organism>
<evidence type="ECO:0000255" key="1">
    <source>
        <dbReference type="HAMAP-Rule" id="MF_01325"/>
    </source>
</evidence>
<evidence type="ECO:0000305" key="2"/>
<comment type="function">
    <text evidence="1">One of the primary rRNA binding proteins, it binds directly near the 3'-end of the 23S rRNA, where it nucleates assembly of the 50S subunit.</text>
</comment>
<comment type="subunit">
    <text evidence="1">Part of the 50S ribosomal subunit. Forms a cluster with proteins L14 and L19.</text>
</comment>
<comment type="PTM">
    <text evidence="1">Methylated by PrmB.</text>
</comment>
<comment type="similarity">
    <text evidence="1">Belongs to the universal ribosomal protein uL3 family.</text>
</comment>
<gene>
    <name evidence="1" type="primary">rplC</name>
    <name type="ordered locus">Bfl191</name>
</gene>
<proteinExistence type="inferred from homology"/>
<keyword id="KW-0488">Methylation</keyword>
<keyword id="KW-1185">Reference proteome</keyword>
<keyword id="KW-0687">Ribonucleoprotein</keyword>
<keyword id="KW-0689">Ribosomal protein</keyword>
<keyword id="KW-0694">RNA-binding</keyword>
<keyword id="KW-0699">rRNA-binding</keyword>
<sequence>MDGLVGRKLGMTRIINEEGIMIAVTMIEILPHYVTQVKNKEKDGYCAVQVTTGNTRDKCLNKPKLGHLKKLGINYGKGLWEFRLNDSNRLISVGDIFTLKVLKCINKVDVTGISKGKGFAGAVKRWNFRTQDASHGNSLSHRAPGSIGQNQTPGKVFKGKKMAGHLGYEKATIQNLAVINIDIKNNLLLVKGAIPGVIGENVIVKRSVKIGYFKEMSSI</sequence>